<sequence>MLEKTMRMNYLYDFYQALLTPKQRNYMALYYLDDYSLGEIAEQYEVSRQAVYDNIRRTEAMLEQYEEKLGLLRKYERRRQIIERLKDYISRRYGADAELAALVRELDELD</sequence>
<reference key="1">
    <citation type="journal article" date="2004" name="Nucleic Acids Res.">
        <title>Thermoadaptation trait revealed by the genome sequence of thermophilic Geobacillus kaustophilus.</title>
        <authorList>
            <person name="Takami H."/>
            <person name="Takaki Y."/>
            <person name="Chee G.-J."/>
            <person name="Nishi S."/>
            <person name="Shimamura S."/>
            <person name="Suzuki H."/>
            <person name="Matsui S."/>
            <person name="Uchiyama I."/>
        </authorList>
    </citation>
    <scope>NUCLEOTIDE SEQUENCE [LARGE SCALE GENOMIC DNA]</scope>
    <source>
        <strain>HTA426</strain>
    </source>
</reference>
<gene>
    <name type="ordered locus">GK1195</name>
</gene>
<name>Y1195_GEOKA</name>
<proteinExistence type="inferred from homology"/>
<evidence type="ECO:0000255" key="1">
    <source>
        <dbReference type="HAMAP-Rule" id="MF_00245"/>
    </source>
</evidence>
<accession>Q5L0Q0</accession>
<protein>
    <recommendedName>
        <fullName evidence="1">UPF0122 protein GK1195</fullName>
    </recommendedName>
</protein>
<organism>
    <name type="scientific">Geobacillus kaustophilus (strain HTA426)</name>
    <dbReference type="NCBI Taxonomy" id="235909"/>
    <lineage>
        <taxon>Bacteria</taxon>
        <taxon>Bacillati</taxon>
        <taxon>Bacillota</taxon>
        <taxon>Bacilli</taxon>
        <taxon>Bacillales</taxon>
        <taxon>Anoxybacillaceae</taxon>
        <taxon>Geobacillus</taxon>
        <taxon>Geobacillus thermoleovorans group</taxon>
    </lineage>
</organism>
<feature type="chain" id="PRO_1000012527" description="UPF0122 protein GK1195">
    <location>
        <begin position="1"/>
        <end position="110"/>
    </location>
</feature>
<dbReference type="EMBL" id="BA000043">
    <property type="protein sequence ID" value="BAD75480.1"/>
    <property type="molecule type" value="Genomic_DNA"/>
</dbReference>
<dbReference type="RefSeq" id="WP_011230695.1">
    <property type="nucleotide sequence ID" value="NC_006510.1"/>
</dbReference>
<dbReference type="SMR" id="Q5L0Q0"/>
<dbReference type="STRING" id="235909.GK1195"/>
<dbReference type="KEGG" id="gka:GK1195"/>
<dbReference type="eggNOG" id="COG2739">
    <property type="taxonomic scope" value="Bacteria"/>
</dbReference>
<dbReference type="HOGENOM" id="CLU_129218_1_0_9"/>
<dbReference type="Proteomes" id="UP000001172">
    <property type="component" value="Chromosome"/>
</dbReference>
<dbReference type="Gene3D" id="1.10.10.10">
    <property type="entry name" value="Winged helix-like DNA-binding domain superfamily/Winged helix DNA-binding domain"/>
    <property type="match status" value="1"/>
</dbReference>
<dbReference type="HAMAP" id="MF_00245">
    <property type="entry name" value="UPF0122"/>
    <property type="match status" value="1"/>
</dbReference>
<dbReference type="InterPro" id="IPR013324">
    <property type="entry name" value="RNA_pol_sigma_r3/r4-like"/>
</dbReference>
<dbReference type="InterPro" id="IPR007394">
    <property type="entry name" value="UPF0122"/>
</dbReference>
<dbReference type="InterPro" id="IPR054831">
    <property type="entry name" value="UPF0122_fam_protein"/>
</dbReference>
<dbReference type="InterPro" id="IPR036388">
    <property type="entry name" value="WH-like_DNA-bd_sf"/>
</dbReference>
<dbReference type="NCBIfam" id="NF001068">
    <property type="entry name" value="PRK00118.1-4"/>
    <property type="match status" value="1"/>
</dbReference>
<dbReference type="NCBIfam" id="NF001070">
    <property type="entry name" value="PRK00118.1-6"/>
    <property type="match status" value="1"/>
</dbReference>
<dbReference type="NCBIfam" id="NF045758">
    <property type="entry name" value="YlxM"/>
    <property type="match status" value="1"/>
</dbReference>
<dbReference type="PANTHER" id="PTHR40083">
    <property type="entry name" value="UPF0122 PROTEIN CBO2450/CLC_2298"/>
    <property type="match status" value="1"/>
</dbReference>
<dbReference type="PANTHER" id="PTHR40083:SF1">
    <property type="entry name" value="UPF0122 PROTEIN YLXM"/>
    <property type="match status" value="1"/>
</dbReference>
<dbReference type="Pfam" id="PF04297">
    <property type="entry name" value="UPF0122"/>
    <property type="match status" value="1"/>
</dbReference>
<dbReference type="SUPFAM" id="SSF88659">
    <property type="entry name" value="Sigma3 and sigma4 domains of RNA polymerase sigma factors"/>
    <property type="match status" value="1"/>
</dbReference>
<comment type="function">
    <text evidence="1">Might take part in the signal recognition particle (SRP) pathway. This is inferred from the conservation of its genetic proximity to ftsY/ffh. May be a regulatory protein.</text>
</comment>
<comment type="similarity">
    <text evidence="1">Belongs to the UPF0122 family.</text>
</comment>
<keyword id="KW-1185">Reference proteome</keyword>